<comment type="function">
    <text evidence="1">A protein kinase that phosphorylates Ser and Thr residues. Probably acts to suppress the effects of stress linked to accumulation of reactive oxygen species. Probably involved in the extracytoplasmic stress response.</text>
</comment>
<comment type="catalytic activity">
    <reaction evidence="1">
        <text>L-seryl-[protein] + ATP = O-phospho-L-seryl-[protein] + ADP + H(+)</text>
        <dbReference type="Rhea" id="RHEA:17989"/>
        <dbReference type="Rhea" id="RHEA-COMP:9863"/>
        <dbReference type="Rhea" id="RHEA-COMP:11604"/>
        <dbReference type="ChEBI" id="CHEBI:15378"/>
        <dbReference type="ChEBI" id="CHEBI:29999"/>
        <dbReference type="ChEBI" id="CHEBI:30616"/>
        <dbReference type="ChEBI" id="CHEBI:83421"/>
        <dbReference type="ChEBI" id="CHEBI:456216"/>
        <dbReference type="EC" id="2.7.11.1"/>
    </reaction>
</comment>
<comment type="catalytic activity">
    <reaction evidence="1">
        <text>L-threonyl-[protein] + ATP = O-phospho-L-threonyl-[protein] + ADP + H(+)</text>
        <dbReference type="Rhea" id="RHEA:46608"/>
        <dbReference type="Rhea" id="RHEA-COMP:11060"/>
        <dbReference type="Rhea" id="RHEA-COMP:11605"/>
        <dbReference type="ChEBI" id="CHEBI:15378"/>
        <dbReference type="ChEBI" id="CHEBI:30013"/>
        <dbReference type="ChEBI" id="CHEBI:30616"/>
        <dbReference type="ChEBI" id="CHEBI:61977"/>
        <dbReference type="ChEBI" id="CHEBI:456216"/>
        <dbReference type="EC" id="2.7.11.1"/>
    </reaction>
</comment>
<comment type="cofactor">
    <cofactor evidence="1">
        <name>Mg(2+)</name>
        <dbReference type="ChEBI" id="CHEBI:18420"/>
    </cofactor>
</comment>
<comment type="subunit">
    <text evidence="1">Monomer.</text>
</comment>
<comment type="subcellular location">
    <subcellularLocation>
        <location evidence="1">Cytoplasm</location>
    </subcellularLocation>
</comment>
<comment type="similarity">
    <text evidence="1">Belongs to the SrkA/RdoA protein kinase family.</text>
</comment>
<gene>
    <name evidence="1" type="primary">srkA</name>
    <name type="ordered locus">SPA3837</name>
</gene>
<keyword id="KW-0067">ATP-binding</keyword>
<keyword id="KW-0963">Cytoplasm</keyword>
<keyword id="KW-0418">Kinase</keyword>
<keyword id="KW-0460">Magnesium</keyword>
<keyword id="KW-0479">Metal-binding</keyword>
<keyword id="KW-0547">Nucleotide-binding</keyword>
<keyword id="KW-0597">Phosphoprotein</keyword>
<keyword id="KW-0723">Serine/threonine-protein kinase</keyword>
<keyword id="KW-0346">Stress response</keyword>
<keyword id="KW-0808">Transferase</keyword>
<reference key="1">
    <citation type="journal article" date="2004" name="Nat. Genet.">
        <title>Comparison of genome degradation in Paratyphi A and Typhi, human-restricted serovars of Salmonella enterica that cause typhoid.</title>
        <authorList>
            <person name="McClelland M."/>
            <person name="Sanderson K.E."/>
            <person name="Clifton S.W."/>
            <person name="Latreille P."/>
            <person name="Porwollik S."/>
            <person name="Sabo A."/>
            <person name="Meyer R."/>
            <person name="Bieri T."/>
            <person name="Ozersky P."/>
            <person name="McLellan M."/>
            <person name="Harkins C.R."/>
            <person name="Wang C."/>
            <person name="Nguyen C."/>
            <person name="Berghoff A."/>
            <person name="Elliott G."/>
            <person name="Kohlberg S."/>
            <person name="Strong C."/>
            <person name="Du F."/>
            <person name="Carter J."/>
            <person name="Kremizki C."/>
            <person name="Layman D."/>
            <person name="Leonard S."/>
            <person name="Sun H."/>
            <person name="Fulton L."/>
            <person name="Nash W."/>
            <person name="Miner T."/>
            <person name="Minx P."/>
            <person name="Delehaunty K."/>
            <person name="Fronick C."/>
            <person name="Magrini V."/>
            <person name="Nhan M."/>
            <person name="Warren W."/>
            <person name="Florea L."/>
            <person name="Spieth J."/>
            <person name="Wilson R.K."/>
        </authorList>
    </citation>
    <scope>NUCLEOTIDE SEQUENCE [LARGE SCALE GENOMIC DNA]</scope>
    <source>
        <strain>ATCC 9150 / SARB42</strain>
    </source>
</reference>
<name>SRKA_SALPA</name>
<accession>Q5PKB8</accession>
<dbReference type="EC" id="2.7.11.1" evidence="1"/>
<dbReference type="EMBL" id="CP000026">
    <property type="protein sequence ID" value="AAV79606.1"/>
    <property type="molecule type" value="Genomic_DNA"/>
</dbReference>
<dbReference type="RefSeq" id="WP_000999265.1">
    <property type="nucleotide sequence ID" value="NC_006511.1"/>
</dbReference>
<dbReference type="SMR" id="Q5PKB8"/>
<dbReference type="KEGG" id="spt:SPA3837"/>
<dbReference type="HOGENOM" id="CLU_054715_0_0_6"/>
<dbReference type="Proteomes" id="UP000008185">
    <property type="component" value="Chromosome"/>
</dbReference>
<dbReference type="GO" id="GO:0005737">
    <property type="term" value="C:cytoplasm"/>
    <property type="evidence" value="ECO:0007669"/>
    <property type="project" value="UniProtKB-SubCell"/>
</dbReference>
<dbReference type="GO" id="GO:0005524">
    <property type="term" value="F:ATP binding"/>
    <property type="evidence" value="ECO:0007669"/>
    <property type="project" value="UniProtKB-UniRule"/>
</dbReference>
<dbReference type="GO" id="GO:0000287">
    <property type="term" value="F:magnesium ion binding"/>
    <property type="evidence" value="ECO:0007669"/>
    <property type="project" value="UniProtKB-UniRule"/>
</dbReference>
<dbReference type="GO" id="GO:0106310">
    <property type="term" value="F:protein serine kinase activity"/>
    <property type="evidence" value="ECO:0007669"/>
    <property type="project" value="RHEA"/>
</dbReference>
<dbReference type="GO" id="GO:0004674">
    <property type="term" value="F:protein serine/threonine kinase activity"/>
    <property type="evidence" value="ECO:0007669"/>
    <property type="project" value="UniProtKB-UniRule"/>
</dbReference>
<dbReference type="Gene3D" id="1.20.1270.170">
    <property type="match status" value="1"/>
</dbReference>
<dbReference type="Gene3D" id="3.30.200.70">
    <property type="match status" value="1"/>
</dbReference>
<dbReference type="Gene3D" id="1.10.510.10">
    <property type="entry name" value="Transferase(Phosphotransferase) domain 1"/>
    <property type="match status" value="1"/>
</dbReference>
<dbReference type="HAMAP" id="MF_01497">
    <property type="entry name" value="SrkA_kinase"/>
    <property type="match status" value="1"/>
</dbReference>
<dbReference type="InterPro" id="IPR002575">
    <property type="entry name" value="Aminoglycoside_PTrfase"/>
</dbReference>
<dbReference type="InterPro" id="IPR011009">
    <property type="entry name" value="Kinase-like_dom_sf"/>
</dbReference>
<dbReference type="InterPro" id="IPR032882">
    <property type="entry name" value="SrkA/RdoA"/>
</dbReference>
<dbReference type="NCBIfam" id="NF008738">
    <property type="entry name" value="PRK11768.1"/>
    <property type="match status" value="1"/>
</dbReference>
<dbReference type="PANTHER" id="PTHR39573">
    <property type="entry name" value="STRESS RESPONSE KINASE A"/>
    <property type="match status" value="1"/>
</dbReference>
<dbReference type="PANTHER" id="PTHR39573:SF1">
    <property type="entry name" value="STRESS RESPONSE KINASE A"/>
    <property type="match status" value="1"/>
</dbReference>
<dbReference type="Pfam" id="PF01636">
    <property type="entry name" value="APH"/>
    <property type="match status" value="1"/>
</dbReference>
<dbReference type="SUPFAM" id="SSF56112">
    <property type="entry name" value="Protein kinase-like (PK-like)"/>
    <property type="match status" value="1"/>
</dbReference>
<proteinExistence type="inferred from homology"/>
<protein>
    <recommendedName>
        <fullName evidence="1">Stress response kinase A</fullName>
        <ecNumber evidence="1">2.7.11.1</ecNumber>
    </recommendedName>
    <alternativeName>
        <fullName evidence="1">Serine/threonine-protein kinase SrkA</fullName>
    </alternativeName>
</protein>
<feature type="chain" id="PRO_0000209578" description="Stress response kinase A">
    <location>
        <begin position="1"/>
        <end position="328"/>
    </location>
</feature>
<feature type="active site" description="Proton acceptor" evidence="1">
    <location>
        <position position="201"/>
    </location>
</feature>
<feature type="active site" evidence="1">
    <location>
        <position position="217"/>
    </location>
</feature>
<feature type="binding site" evidence="1">
    <location>
        <position position="206"/>
    </location>
    <ligand>
        <name>Mg(2+)</name>
        <dbReference type="ChEBI" id="CHEBI:18420"/>
    </ligand>
</feature>
<feature type="binding site" evidence="1">
    <location>
        <position position="217"/>
    </location>
    <ligand>
        <name>Mg(2+)</name>
        <dbReference type="ChEBI" id="CHEBI:18420"/>
    </ligand>
</feature>
<feature type="site" description="ATP" evidence="1">
    <location>
        <position position="36"/>
    </location>
</feature>
<sequence>MNDNAFTFQTLHPETIMDALFEQGIRVDSGLTPLNSYENRVYQFQDEDRRRFVVKFYRPERWSVDQIREEHQFALELVKDEVPVAAPLAFNGQTLLAHQGYHYAIFPSVGGRQFEADNIDQMEAVGRYLGRLHQTGRKRPFTFRPDIGLAEYLFEPRQVFEDAALIPSGQKAAFLKATDTLLSAVTECWRTDFATLRLHGDCHAGNILWRDGPLFVDLDDARNGPAIQDLWMLLNGNKAEQRMQLETIIEAYEEVSEFDTAEIGLIEPLRAMRLVYYLAWLIRRWGDPAFPKNFPWLTGEDYWQRQTTTFIEQTKILHEPPLQLTPMY</sequence>
<evidence type="ECO:0000255" key="1">
    <source>
        <dbReference type="HAMAP-Rule" id="MF_01497"/>
    </source>
</evidence>
<organism>
    <name type="scientific">Salmonella paratyphi A (strain ATCC 9150 / SARB42)</name>
    <dbReference type="NCBI Taxonomy" id="295319"/>
    <lineage>
        <taxon>Bacteria</taxon>
        <taxon>Pseudomonadati</taxon>
        <taxon>Pseudomonadota</taxon>
        <taxon>Gammaproteobacteria</taxon>
        <taxon>Enterobacterales</taxon>
        <taxon>Enterobacteriaceae</taxon>
        <taxon>Salmonella</taxon>
    </lineage>
</organism>